<protein>
    <recommendedName>
        <fullName evidence="1">Carbamoyl phosphate synthase large chain</fullName>
        <ecNumber evidence="1">6.3.4.16</ecNumber>
        <ecNumber evidence="1">6.3.5.5</ecNumber>
    </recommendedName>
    <alternativeName>
        <fullName evidence="1">Carbamoyl phosphate synthetase ammonia chain</fullName>
    </alternativeName>
</protein>
<feature type="chain" id="PRO_0000145010" description="Carbamoyl phosphate synthase large chain">
    <location>
        <begin position="1"/>
        <end position="1085"/>
    </location>
</feature>
<feature type="domain" description="ATP-grasp 1" evidence="1">
    <location>
        <begin position="131"/>
        <end position="326"/>
    </location>
</feature>
<feature type="domain" description="ATP-grasp 2" evidence="1">
    <location>
        <begin position="678"/>
        <end position="871"/>
    </location>
</feature>
<feature type="domain" description="MGS-like" evidence="1">
    <location>
        <begin position="952"/>
        <end position="1085"/>
    </location>
</feature>
<feature type="region of interest" description="Carboxyphosphate synthetic domain" evidence="1">
    <location>
        <begin position="1"/>
        <end position="399"/>
    </location>
</feature>
<feature type="region of interest" description="Oligomerization domain" evidence="1">
    <location>
        <begin position="400"/>
        <end position="552"/>
    </location>
</feature>
<feature type="region of interest" description="Carbamoyl phosphate synthetic domain" evidence="1">
    <location>
        <begin position="553"/>
        <end position="951"/>
    </location>
</feature>
<feature type="region of interest" description="Allosteric domain" evidence="1">
    <location>
        <begin position="952"/>
        <end position="1085"/>
    </location>
</feature>
<feature type="binding site" evidence="1">
    <location>
        <position position="127"/>
    </location>
    <ligand>
        <name>ATP</name>
        <dbReference type="ChEBI" id="CHEBI:30616"/>
        <label>1</label>
    </ligand>
</feature>
<feature type="binding site" evidence="1">
    <location>
        <position position="167"/>
    </location>
    <ligand>
        <name>ATP</name>
        <dbReference type="ChEBI" id="CHEBI:30616"/>
        <label>1</label>
    </ligand>
</feature>
<feature type="binding site" evidence="1">
    <location>
        <position position="174"/>
    </location>
    <ligand>
        <name>ATP</name>
        <dbReference type="ChEBI" id="CHEBI:30616"/>
        <label>1</label>
    </ligand>
</feature>
<feature type="binding site" evidence="1">
    <location>
        <position position="206"/>
    </location>
    <ligand>
        <name>ATP</name>
        <dbReference type="ChEBI" id="CHEBI:30616"/>
        <label>1</label>
    </ligand>
</feature>
<feature type="binding site" evidence="1">
    <location>
        <position position="208"/>
    </location>
    <ligand>
        <name>ATP</name>
        <dbReference type="ChEBI" id="CHEBI:30616"/>
        <label>1</label>
    </ligand>
</feature>
<feature type="binding site" evidence="1">
    <location>
        <position position="213"/>
    </location>
    <ligand>
        <name>ATP</name>
        <dbReference type="ChEBI" id="CHEBI:30616"/>
        <label>1</label>
    </ligand>
</feature>
<feature type="binding site" evidence="1">
    <location>
        <position position="239"/>
    </location>
    <ligand>
        <name>ATP</name>
        <dbReference type="ChEBI" id="CHEBI:30616"/>
        <label>1</label>
    </ligand>
</feature>
<feature type="binding site" evidence="1">
    <location>
        <position position="240"/>
    </location>
    <ligand>
        <name>ATP</name>
        <dbReference type="ChEBI" id="CHEBI:30616"/>
        <label>1</label>
    </ligand>
</feature>
<feature type="binding site" evidence="1">
    <location>
        <position position="241"/>
    </location>
    <ligand>
        <name>ATP</name>
        <dbReference type="ChEBI" id="CHEBI:30616"/>
        <label>1</label>
    </ligand>
</feature>
<feature type="binding site" evidence="1">
    <location>
        <position position="283"/>
    </location>
    <ligand>
        <name>ATP</name>
        <dbReference type="ChEBI" id="CHEBI:30616"/>
        <label>1</label>
    </ligand>
</feature>
<feature type="binding site" evidence="1">
    <location>
        <position position="283"/>
    </location>
    <ligand>
        <name>Mg(2+)</name>
        <dbReference type="ChEBI" id="CHEBI:18420"/>
        <label>1</label>
    </ligand>
</feature>
<feature type="binding site" evidence="1">
    <location>
        <position position="283"/>
    </location>
    <ligand>
        <name>Mn(2+)</name>
        <dbReference type="ChEBI" id="CHEBI:29035"/>
        <label>1</label>
    </ligand>
</feature>
<feature type="binding site" evidence="1">
    <location>
        <position position="297"/>
    </location>
    <ligand>
        <name>ATP</name>
        <dbReference type="ChEBI" id="CHEBI:30616"/>
        <label>1</label>
    </ligand>
</feature>
<feature type="binding site" evidence="1">
    <location>
        <position position="297"/>
    </location>
    <ligand>
        <name>Mg(2+)</name>
        <dbReference type="ChEBI" id="CHEBI:18420"/>
        <label>1</label>
    </ligand>
</feature>
<feature type="binding site" evidence="1">
    <location>
        <position position="297"/>
    </location>
    <ligand>
        <name>Mg(2+)</name>
        <dbReference type="ChEBI" id="CHEBI:18420"/>
        <label>2</label>
    </ligand>
</feature>
<feature type="binding site" evidence="1">
    <location>
        <position position="297"/>
    </location>
    <ligand>
        <name>Mn(2+)</name>
        <dbReference type="ChEBI" id="CHEBI:29035"/>
        <label>1</label>
    </ligand>
</feature>
<feature type="binding site" evidence="1">
    <location>
        <position position="297"/>
    </location>
    <ligand>
        <name>Mn(2+)</name>
        <dbReference type="ChEBI" id="CHEBI:29035"/>
        <label>2</label>
    </ligand>
</feature>
<feature type="binding site" evidence="1">
    <location>
        <position position="299"/>
    </location>
    <ligand>
        <name>Mg(2+)</name>
        <dbReference type="ChEBI" id="CHEBI:18420"/>
        <label>2</label>
    </ligand>
</feature>
<feature type="binding site" evidence="1">
    <location>
        <position position="299"/>
    </location>
    <ligand>
        <name>Mn(2+)</name>
        <dbReference type="ChEBI" id="CHEBI:29035"/>
        <label>2</label>
    </ligand>
</feature>
<feature type="binding site" evidence="1">
    <location>
        <position position="714"/>
    </location>
    <ligand>
        <name>ATP</name>
        <dbReference type="ChEBI" id="CHEBI:30616"/>
        <label>2</label>
    </ligand>
</feature>
<feature type="binding site" evidence="1">
    <location>
        <position position="756"/>
    </location>
    <ligand>
        <name>ATP</name>
        <dbReference type="ChEBI" id="CHEBI:30616"/>
        <label>2</label>
    </ligand>
</feature>
<feature type="binding site" evidence="1">
    <location>
        <position position="758"/>
    </location>
    <ligand>
        <name>ATP</name>
        <dbReference type="ChEBI" id="CHEBI:30616"/>
        <label>2</label>
    </ligand>
</feature>
<feature type="binding site" evidence="1">
    <location>
        <position position="763"/>
    </location>
    <ligand>
        <name>ATP</name>
        <dbReference type="ChEBI" id="CHEBI:30616"/>
        <label>2</label>
    </ligand>
</feature>
<feature type="binding site" evidence="1">
    <location>
        <position position="788"/>
    </location>
    <ligand>
        <name>ATP</name>
        <dbReference type="ChEBI" id="CHEBI:30616"/>
        <label>2</label>
    </ligand>
</feature>
<feature type="binding site" evidence="1">
    <location>
        <position position="789"/>
    </location>
    <ligand>
        <name>ATP</name>
        <dbReference type="ChEBI" id="CHEBI:30616"/>
        <label>2</label>
    </ligand>
</feature>
<feature type="binding site" evidence="1">
    <location>
        <position position="790"/>
    </location>
    <ligand>
        <name>ATP</name>
        <dbReference type="ChEBI" id="CHEBI:30616"/>
        <label>2</label>
    </ligand>
</feature>
<feature type="binding site" evidence="1">
    <location>
        <position position="791"/>
    </location>
    <ligand>
        <name>ATP</name>
        <dbReference type="ChEBI" id="CHEBI:30616"/>
        <label>2</label>
    </ligand>
</feature>
<feature type="binding site" evidence="1">
    <location>
        <position position="830"/>
    </location>
    <ligand>
        <name>ATP</name>
        <dbReference type="ChEBI" id="CHEBI:30616"/>
        <label>2</label>
    </ligand>
</feature>
<feature type="binding site" evidence="1">
    <location>
        <position position="830"/>
    </location>
    <ligand>
        <name>Mg(2+)</name>
        <dbReference type="ChEBI" id="CHEBI:18420"/>
        <label>3</label>
    </ligand>
</feature>
<feature type="binding site" evidence="1">
    <location>
        <position position="830"/>
    </location>
    <ligand>
        <name>Mn(2+)</name>
        <dbReference type="ChEBI" id="CHEBI:29035"/>
        <label>3</label>
    </ligand>
</feature>
<feature type="binding site" evidence="1">
    <location>
        <position position="842"/>
    </location>
    <ligand>
        <name>ATP</name>
        <dbReference type="ChEBI" id="CHEBI:30616"/>
        <label>2</label>
    </ligand>
</feature>
<feature type="binding site" evidence="1">
    <location>
        <position position="842"/>
    </location>
    <ligand>
        <name>Mg(2+)</name>
        <dbReference type="ChEBI" id="CHEBI:18420"/>
        <label>3</label>
    </ligand>
</feature>
<feature type="binding site" evidence="1">
    <location>
        <position position="842"/>
    </location>
    <ligand>
        <name>Mg(2+)</name>
        <dbReference type="ChEBI" id="CHEBI:18420"/>
        <label>4</label>
    </ligand>
</feature>
<feature type="binding site" evidence="1">
    <location>
        <position position="842"/>
    </location>
    <ligand>
        <name>Mn(2+)</name>
        <dbReference type="ChEBI" id="CHEBI:29035"/>
        <label>3</label>
    </ligand>
</feature>
<feature type="binding site" evidence="1">
    <location>
        <position position="842"/>
    </location>
    <ligand>
        <name>Mn(2+)</name>
        <dbReference type="ChEBI" id="CHEBI:29035"/>
        <label>4</label>
    </ligand>
</feature>
<feature type="binding site" evidence="1">
    <location>
        <position position="844"/>
    </location>
    <ligand>
        <name>Mg(2+)</name>
        <dbReference type="ChEBI" id="CHEBI:18420"/>
        <label>4</label>
    </ligand>
</feature>
<feature type="binding site" evidence="1">
    <location>
        <position position="844"/>
    </location>
    <ligand>
        <name>Mn(2+)</name>
        <dbReference type="ChEBI" id="CHEBI:29035"/>
        <label>4</label>
    </ligand>
</feature>
<reference key="1">
    <citation type="journal article" date="1997" name="Nature">
        <title>The complete genome sequence of the gastric pathogen Helicobacter pylori.</title>
        <authorList>
            <person name="Tomb J.-F."/>
            <person name="White O."/>
            <person name="Kerlavage A.R."/>
            <person name="Clayton R.A."/>
            <person name="Sutton G.G."/>
            <person name="Fleischmann R.D."/>
            <person name="Ketchum K.A."/>
            <person name="Klenk H.-P."/>
            <person name="Gill S.R."/>
            <person name="Dougherty B.A."/>
            <person name="Nelson K.E."/>
            <person name="Quackenbush J."/>
            <person name="Zhou L."/>
            <person name="Kirkness E.F."/>
            <person name="Peterson S.N."/>
            <person name="Loftus B.J."/>
            <person name="Richardson D.L."/>
            <person name="Dodson R.J."/>
            <person name="Khalak H.G."/>
            <person name="Glodek A."/>
            <person name="McKenney K."/>
            <person name="FitzGerald L.M."/>
            <person name="Lee N."/>
            <person name="Adams M.D."/>
            <person name="Hickey E.K."/>
            <person name="Berg D.E."/>
            <person name="Gocayne J.D."/>
            <person name="Utterback T.R."/>
            <person name="Peterson J.D."/>
            <person name="Kelley J.M."/>
            <person name="Cotton M.D."/>
            <person name="Weidman J.F."/>
            <person name="Fujii C."/>
            <person name="Bowman C."/>
            <person name="Watthey L."/>
            <person name="Wallin E."/>
            <person name="Hayes W.S."/>
            <person name="Borodovsky M."/>
            <person name="Karp P.D."/>
            <person name="Smith H.O."/>
            <person name="Fraser C.M."/>
            <person name="Venter J.C."/>
        </authorList>
    </citation>
    <scope>NUCLEOTIDE SEQUENCE [LARGE SCALE GENOMIC DNA]</scope>
    <source>
        <strain>ATCC 700392 / 26695</strain>
    </source>
</reference>
<comment type="function">
    <text evidence="1">Large subunit of the glutamine-dependent carbamoyl phosphate synthetase (CPSase). CPSase catalyzes the formation of carbamoyl phosphate from the ammonia moiety of glutamine, carbonate, and phosphate donated by ATP, constituting the first step of 2 biosynthetic pathways, one leading to arginine and/or urea and the other to pyrimidine nucleotides. The large subunit (synthetase) binds the substrates ammonia (free or transferred from glutamine from the small subunit), hydrogencarbonate and ATP and carries out an ATP-coupled ligase reaction, activating hydrogencarbonate by forming carboxy phosphate which reacts with ammonia to form carbamoyl phosphate.</text>
</comment>
<comment type="catalytic activity">
    <reaction evidence="1">
        <text>hydrogencarbonate + L-glutamine + 2 ATP + H2O = carbamoyl phosphate + L-glutamate + 2 ADP + phosphate + 2 H(+)</text>
        <dbReference type="Rhea" id="RHEA:18633"/>
        <dbReference type="ChEBI" id="CHEBI:15377"/>
        <dbReference type="ChEBI" id="CHEBI:15378"/>
        <dbReference type="ChEBI" id="CHEBI:17544"/>
        <dbReference type="ChEBI" id="CHEBI:29985"/>
        <dbReference type="ChEBI" id="CHEBI:30616"/>
        <dbReference type="ChEBI" id="CHEBI:43474"/>
        <dbReference type="ChEBI" id="CHEBI:58228"/>
        <dbReference type="ChEBI" id="CHEBI:58359"/>
        <dbReference type="ChEBI" id="CHEBI:456216"/>
        <dbReference type="EC" id="6.3.5.5"/>
    </reaction>
</comment>
<comment type="catalytic activity">
    <molecule>Carbamoyl phosphate synthase large chain</molecule>
    <reaction evidence="1">
        <text>hydrogencarbonate + NH4(+) + 2 ATP = carbamoyl phosphate + 2 ADP + phosphate + 2 H(+)</text>
        <dbReference type="Rhea" id="RHEA:18029"/>
        <dbReference type="ChEBI" id="CHEBI:15378"/>
        <dbReference type="ChEBI" id="CHEBI:17544"/>
        <dbReference type="ChEBI" id="CHEBI:28938"/>
        <dbReference type="ChEBI" id="CHEBI:30616"/>
        <dbReference type="ChEBI" id="CHEBI:43474"/>
        <dbReference type="ChEBI" id="CHEBI:58228"/>
        <dbReference type="ChEBI" id="CHEBI:456216"/>
        <dbReference type="EC" id="6.3.4.16"/>
    </reaction>
</comment>
<comment type="cofactor">
    <cofactor evidence="1">
        <name>Mg(2+)</name>
        <dbReference type="ChEBI" id="CHEBI:18420"/>
    </cofactor>
    <cofactor evidence="1">
        <name>Mn(2+)</name>
        <dbReference type="ChEBI" id="CHEBI:29035"/>
    </cofactor>
    <text evidence="1">Binds 4 Mg(2+) or Mn(2+) ions per subunit.</text>
</comment>
<comment type="pathway">
    <text evidence="1">Amino-acid biosynthesis; L-arginine biosynthesis; carbamoyl phosphate from bicarbonate: step 1/1.</text>
</comment>
<comment type="pathway">
    <text evidence="1">Pyrimidine metabolism; UMP biosynthesis via de novo pathway; (S)-dihydroorotate from bicarbonate: step 1/3.</text>
</comment>
<comment type="subunit">
    <text evidence="1">Composed of two chains; the small (or glutamine) chain promotes the hydrolysis of glutamine to ammonia, which is used by the large (or ammonia) chain to synthesize carbamoyl phosphate. Tetramer of heterodimers (alpha,beta)4.</text>
</comment>
<comment type="domain">
    <text evidence="1">The large subunit is composed of 2 ATP-grasp domains that are involved in binding the 2 ATP molecules needed for carbamoyl phosphate synthesis. The N-terminal ATP-grasp domain (referred to as the carboxyphosphate synthetic component) catalyzes the ATP-dependent phosphorylation of hydrogencarbonate to carboxyphosphate and the subsequent nucleophilic attack by ammonia to form a carbamate intermediate. The C-terminal ATP-grasp domain (referred to as the carbamoyl phosphate synthetic component) then catalyzes the phosphorylation of carbamate with the second ATP to form the end product carbamoyl phosphate. The reactive and unstable enzyme intermediates are sequentially channeled from one active site to the next through the interior of the protein over a distance of at least 96 A.</text>
</comment>
<comment type="similarity">
    <text evidence="1">Belongs to the CarB family.</text>
</comment>
<sequence length="1085" mass="120074">MPKRTDISNILLIGSGPIVIGQACEFDYSGTQSCKTLKSLGYRVILINSNPATVMTDPEFSHQTYIQPITPENIATIIEKEKIDAILPTMGGQTALNAVMQMHQKGMLEGVELLGAKIEAIKKGEDRQAFKEAMLKIGMDLPKGRYAYTELEALEAINEIGFPAIIRASFTLAGGGSGVAYNIEEFQELAKNALDASPINEILIEESLLGWKEYEMEVIRDSKDNCIIVCCIENIDPMGVHTGDSITIAPSLTLTDKEYQRMRDASFAILREIGVDTGGSNVQFAIHPETLRMVVIEMNPRVSRSSALASKATGFPIAKVATMLAVGFSLDEIQNDITNTPASFEPSLDYIVVKIPRFAFEKFAGVSSTLGTSMKSIGEVMAIGGNFLEALQKALCSLENNWLGFESLSKDLEAIKKEIRRPNPKRLLYIADAFRLGVCVDEVFELCQIDRWFLSQIQKLVEVEESINSSVLTDAKKLRGLKNLGFSDARIAAKIKENENLEVSPFEVELARSNLQIVPNFEEVDTCAAEFLSLTPYLYSTYAPNPLPPIENKQEKKEKKILIIGSGPNRIGQGIEFDYCCVHASLALKDLNIKSVMFNCNPETVSTDYDTSDTLYFEPIHFECVKSIIQRERVDGIIVHFGGQTPLKLAKDLAKMQAPIIGTPFKVIDIAEDREKFSLFLKELDIKQPKNGMAKSVDEAYSIANVIGFPIIVRPSYVLGGQHMQILENIEELRHYLESVTHALEISPKNPLLIDKFLEKAVELDVDAICDKKEVYIAGILQHIEEAGIHSGDSACFIPSTLSPEILDEIERVSAKIALHLGVVGLLNIQFAVHQNSLYLIEVNPRASRTVPFLSKALGVPLAKVATRVMVLEDLKEALKFYDKKNIVGYSKGVYKPKMPHFVALKEAVFPFNKLYGSDLILGPEMKSTGEVMGIARSLGLAFFKAQTACFNPIKNKGLIFVSIKDKDKEEACVLMKRLVQLGFELCATEGTHKALEKAGVKSLKVLKISEGRPNIMDLMMNGEISMAINTSDHKSQDDAKLIRASVLKNHVSYFTTLSTIEVLLLALEESSKEDELLALQDYLK</sequence>
<name>CARB_HELPY</name>
<dbReference type="EC" id="6.3.4.16" evidence="1"/>
<dbReference type="EC" id="6.3.5.5" evidence="1"/>
<dbReference type="EMBL" id="AE000511">
    <property type="protein sequence ID" value="AAD07963.1"/>
    <property type="molecule type" value="Genomic_DNA"/>
</dbReference>
<dbReference type="PIR" id="G64634">
    <property type="entry name" value="G64634"/>
</dbReference>
<dbReference type="RefSeq" id="NP_207711.1">
    <property type="nucleotide sequence ID" value="NC_000915.1"/>
</dbReference>
<dbReference type="RefSeq" id="WP_001126584.1">
    <property type="nucleotide sequence ID" value="NC_018939.1"/>
</dbReference>
<dbReference type="SMR" id="O25577"/>
<dbReference type="DIP" id="DIP-3181N"/>
<dbReference type="FunCoup" id="O25577">
    <property type="interactions" value="363"/>
</dbReference>
<dbReference type="IntAct" id="O25577">
    <property type="interactions" value="7"/>
</dbReference>
<dbReference type="MINT" id="O25577"/>
<dbReference type="STRING" id="85962.HP_0919"/>
<dbReference type="PaxDb" id="85962-C694_04730"/>
<dbReference type="EnsemblBacteria" id="AAD07963">
    <property type="protein sequence ID" value="AAD07963"/>
    <property type="gene ID" value="HP_0919"/>
</dbReference>
<dbReference type="KEGG" id="heo:C694_04730"/>
<dbReference type="KEGG" id="hpy:HP_0919"/>
<dbReference type="PATRIC" id="fig|85962.47.peg.984"/>
<dbReference type="eggNOG" id="COG0458">
    <property type="taxonomic scope" value="Bacteria"/>
</dbReference>
<dbReference type="InParanoid" id="O25577"/>
<dbReference type="OrthoDB" id="9804197at2"/>
<dbReference type="PhylomeDB" id="O25577"/>
<dbReference type="UniPathway" id="UPA00068">
    <property type="reaction ID" value="UER00171"/>
</dbReference>
<dbReference type="UniPathway" id="UPA00070">
    <property type="reaction ID" value="UER00115"/>
</dbReference>
<dbReference type="Proteomes" id="UP000000429">
    <property type="component" value="Chromosome"/>
</dbReference>
<dbReference type="GO" id="GO:0005737">
    <property type="term" value="C:cytoplasm"/>
    <property type="evidence" value="ECO:0000318"/>
    <property type="project" value="GO_Central"/>
</dbReference>
<dbReference type="GO" id="GO:0005524">
    <property type="term" value="F:ATP binding"/>
    <property type="evidence" value="ECO:0007669"/>
    <property type="project" value="UniProtKB-UniRule"/>
</dbReference>
<dbReference type="GO" id="GO:0004087">
    <property type="term" value="F:carbamoyl-phosphate synthase (ammonia) activity"/>
    <property type="evidence" value="ECO:0007669"/>
    <property type="project" value="RHEA"/>
</dbReference>
<dbReference type="GO" id="GO:0004088">
    <property type="term" value="F:carbamoyl-phosphate synthase (glutamine-hydrolyzing) activity"/>
    <property type="evidence" value="ECO:0007669"/>
    <property type="project" value="UniProtKB-UniRule"/>
</dbReference>
<dbReference type="GO" id="GO:0046872">
    <property type="term" value="F:metal ion binding"/>
    <property type="evidence" value="ECO:0007669"/>
    <property type="project" value="UniProtKB-KW"/>
</dbReference>
<dbReference type="GO" id="GO:0044205">
    <property type="term" value="P:'de novo' UMP biosynthetic process"/>
    <property type="evidence" value="ECO:0007669"/>
    <property type="project" value="UniProtKB-UniRule"/>
</dbReference>
<dbReference type="GO" id="GO:0006541">
    <property type="term" value="P:glutamine metabolic process"/>
    <property type="evidence" value="ECO:0000318"/>
    <property type="project" value="GO_Central"/>
</dbReference>
<dbReference type="GO" id="GO:0006526">
    <property type="term" value="P:L-arginine biosynthetic process"/>
    <property type="evidence" value="ECO:0007669"/>
    <property type="project" value="UniProtKB-UniRule"/>
</dbReference>
<dbReference type="CDD" id="cd01424">
    <property type="entry name" value="MGS_CPS_II"/>
    <property type="match status" value="1"/>
</dbReference>
<dbReference type="FunFam" id="1.10.1030.10:FF:000010">
    <property type="entry name" value="Carbamoyl-phosphate synthase large chain"/>
    <property type="match status" value="1"/>
</dbReference>
<dbReference type="FunFam" id="3.30.1490.20:FF:000001">
    <property type="entry name" value="Carbamoyl-phosphate synthase large chain"/>
    <property type="match status" value="1"/>
</dbReference>
<dbReference type="FunFam" id="3.30.470.20:FF:000007">
    <property type="entry name" value="Carbamoyl-phosphate synthase large chain"/>
    <property type="match status" value="1"/>
</dbReference>
<dbReference type="FunFam" id="3.30.470.20:FF:000026">
    <property type="entry name" value="Carbamoyl-phosphate synthase large chain"/>
    <property type="match status" value="1"/>
</dbReference>
<dbReference type="FunFam" id="3.40.50.20:FF:000001">
    <property type="entry name" value="Carbamoyl-phosphate synthase large chain"/>
    <property type="match status" value="2"/>
</dbReference>
<dbReference type="Gene3D" id="3.40.50.20">
    <property type="match status" value="2"/>
</dbReference>
<dbReference type="Gene3D" id="3.30.1490.20">
    <property type="entry name" value="ATP-grasp fold, A domain"/>
    <property type="match status" value="1"/>
</dbReference>
<dbReference type="Gene3D" id="3.30.470.20">
    <property type="entry name" value="ATP-grasp fold, B domain"/>
    <property type="match status" value="2"/>
</dbReference>
<dbReference type="Gene3D" id="1.10.1030.10">
    <property type="entry name" value="Carbamoyl-phosphate synthetase, large subunit oligomerisation domain"/>
    <property type="match status" value="1"/>
</dbReference>
<dbReference type="Gene3D" id="3.40.50.1380">
    <property type="entry name" value="Methylglyoxal synthase-like domain"/>
    <property type="match status" value="1"/>
</dbReference>
<dbReference type="HAMAP" id="MF_01210_B">
    <property type="entry name" value="CPSase_L_chain_B"/>
    <property type="match status" value="1"/>
</dbReference>
<dbReference type="InterPro" id="IPR011761">
    <property type="entry name" value="ATP-grasp"/>
</dbReference>
<dbReference type="InterPro" id="IPR013815">
    <property type="entry name" value="ATP_grasp_subdomain_1"/>
</dbReference>
<dbReference type="InterPro" id="IPR006275">
    <property type="entry name" value="CarbamoylP_synth_lsu"/>
</dbReference>
<dbReference type="InterPro" id="IPR005480">
    <property type="entry name" value="CarbamoylP_synth_lsu_oligo"/>
</dbReference>
<dbReference type="InterPro" id="IPR036897">
    <property type="entry name" value="CarbamoylP_synth_lsu_oligo_sf"/>
</dbReference>
<dbReference type="InterPro" id="IPR005479">
    <property type="entry name" value="CbamoylP_synth_lsu-like_ATP-bd"/>
</dbReference>
<dbReference type="InterPro" id="IPR005483">
    <property type="entry name" value="CbamoylP_synth_lsu_CPSase_dom"/>
</dbReference>
<dbReference type="InterPro" id="IPR011607">
    <property type="entry name" value="MGS-like_dom"/>
</dbReference>
<dbReference type="InterPro" id="IPR036914">
    <property type="entry name" value="MGS-like_dom_sf"/>
</dbReference>
<dbReference type="InterPro" id="IPR033937">
    <property type="entry name" value="MGS_CPS_CarB"/>
</dbReference>
<dbReference type="InterPro" id="IPR016185">
    <property type="entry name" value="PreATP-grasp_dom_sf"/>
</dbReference>
<dbReference type="NCBIfam" id="TIGR01369">
    <property type="entry name" value="CPSaseII_lrg"/>
    <property type="match status" value="1"/>
</dbReference>
<dbReference type="NCBIfam" id="NF003671">
    <property type="entry name" value="PRK05294.1"/>
    <property type="match status" value="1"/>
</dbReference>
<dbReference type="NCBIfam" id="NF009455">
    <property type="entry name" value="PRK12815.1"/>
    <property type="match status" value="1"/>
</dbReference>
<dbReference type="PANTHER" id="PTHR11405:SF53">
    <property type="entry name" value="CARBAMOYL-PHOSPHATE SYNTHASE [AMMONIA], MITOCHONDRIAL"/>
    <property type="match status" value="1"/>
</dbReference>
<dbReference type="PANTHER" id="PTHR11405">
    <property type="entry name" value="CARBAMOYLTRANSFERASE FAMILY MEMBER"/>
    <property type="match status" value="1"/>
</dbReference>
<dbReference type="Pfam" id="PF02786">
    <property type="entry name" value="CPSase_L_D2"/>
    <property type="match status" value="2"/>
</dbReference>
<dbReference type="Pfam" id="PF02787">
    <property type="entry name" value="CPSase_L_D3"/>
    <property type="match status" value="1"/>
</dbReference>
<dbReference type="Pfam" id="PF02142">
    <property type="entry name" value="MGS"/>
    <property type="match status" value="1"/>
</dbReference>
<dbReference type="PRINTS" id="PR00098">
    <property type="entry name" value="CPSASE"/>
</dbReference>
<dbReference type="SMART" id="SM01096">
    <property type="entry name" value="CPSase_L_D3"/>
    <property type="match status" value="1"/>
</dbReference>
<dbReference type="SMART" id="SM00851">
    <property type="entry name" value="MGS"/>
    <property type="match status" value="1"/>
</dbReference>
<dbReference type="SUPFAM" id="SSF48108">
    <property type="entry name" value="Carbamoyl phosphate synthetase, large subunit connection domain"/>
    <property type="match status" value="1"/>
</dbReference>
<dbReference type="SUPFAM" id="SSF56059">
    <property type="entry name" value="Glutathione synthetase ATP-binding domain-like"/>
    <property type="match status" value="2"/>
</dbReference>
<dbReference type="SUPFAM" id="SSF52335">
    <property type="entry name" value="Methylglyoxal synthase-like"/>
    <property type="match status" value="1"/>
</dbReference>
<dbReference type="SUPFAM" id="SSF52440">
    <property type="entry name" value="PreATP-grasp domain"/>
    <property type="match status" value="2"/>
</dbReference>
<dbReference type="PROSITE" id="PS50975">
    <property type="entry name" value="ATP_GRASP"/>
    <property type="match status" value="2"/>
</dbReference>
<dbReference type="PROSITE" id="PS00867">
    <property type="entry name" value="CPSASE_2"/>
    <property type="match status" value="2"/>
</dbReference>
<dbReference type="PROSITE" id="PS51855">
    <property type="entry name" value="MGS"/>
    <property type="match status" value="1"/>
</dbReference>
<proteinExistence type="inferred from homology"/>
<accession>O25577</accession>
<organism>
    <name type="scientific">Helicobacter pylori (strain ATCC 700392 / 26695)</name>
    <name type="common">Campylobacter pylori</name>
    <dbReference type="NCBI Taxonomy" id="85962"/>
    <lineage>
        <taxon>Bacteria</taxon>
        <taxon>Pseudomonadati</taxon>
        <taxon>Campylobacterota</taxon>
        <taxon>Epsilonproteobacteria</taxon>
        <taxon>Campylobacterales</taxon>
        <taxon>Helicobacteraceae</taxon>
        <taxon>Helicobacter</taxon>
    </lineage>
</organism>
<evidence type="ECO:0000255" key="1">
    <source>
        <dbReference type="HAMAP-Rule" id="MF_01210"/>
    </source>
</evidence>
<keyword id="KW-0028">Amino-acid biosynthesis</keyword>
<keyword id="KW-0055">Arginine biosynthesis</keyword>
<keyword id="KW-0067">ATP-binding</keyword>
<keyword id="KW-0436">Ligase</keyword>
<keyword id="KW-0460">Magnesium</keyword>
<keyword id="KW-0464">Manganese</keyword>
<keyword id="KW-0479">Metal-binding</keyword>
<keyword id="KW-0547">Nucleotide-binding</keyword>
<keyword id="KW-0665">Pyrimidine biosynthesis</keyword>
<keyword id="KW-1185">Reference proteome</keyword>
<keyword id="KW-0677">Repeat</keyword>
<gene>
    <name evidence="1" type="primary">carB</name>
    <name type="ordered locus">HP_0919</name>
</gene>